<organism>
    <name type="scientific">Caenorhabditis elegans</name>
    <dbReference type="NCBI Taxonomy" id="6239"/>
    <lineage>
        <taxon>Eukaryota</taxon>
        <taxon>Metazoa</taxon>
        <taxon>Ecdysozoa</taxon>
        <taxon>Nematoda</taxon>
        <taxon>Chromadorea</taxon>
        <taxon>Rhabditida</taxon>
        <taxon>Rhabditina</taxon>
        <taxon>Rhabditomorpha</taxon>
        <taxon>Rhabditoidea</taxon>
        <taxon>Rhabditidae</taxon>
        <taxon>Peloderinae</taxon>
        <taxon>Caenorhabditis</taxon>
    </lineage>
</organism>
<protein>
    <recommendedName>
        <fullName>Replication factor C subunit 4</fullName>
    </recommendedName>
    <alternativeName>
        <fullName>Activator 1 subunit 4</fullName>
    </alternativeName>
</protein>
<accession>P53016</accession>
<feature type="chain" id="PRO_0000121758" description="Replication factor C subunit 4">
    <location>
        <begin position="1"/>
        <end position="334"/>
    </location>
</feature>
<feature type="binding site" evidence="2">
    <location>
        <begin position="55"/>
        <end position="62"/>
    </location>
    <ligand>
        <name>ATP</name>
        <dbReference type="ChEBI" id="CHEBI:30616"/>
    </ligand>
</feature>
<dbReference type="EMBL" id="FO080392">
    <property type="protein sequence ID" value="CCD63405.1"/>
    <property type="molecule type" value="Genomic_DNA"/>
</dbReference>
<dbReference type="PIR" id="T16219">
    <property type="entry name" value="T16219"/>
</dbReference>
<dbReference type="RefSeq" id="NP_498521.1">
    <property type="nucleotide sequence ID" value="NM_066120.8"/>
</dbReference>
<dbReference type="SMR" id="P53016"/>
<dbReference type="BioGRID" id="41190">
    <property type="interactions" value="10"/>
</dbReference>
<dbReference type="DIP" id="DIP-24293N"/>
<dbReference type="FunCoup" id="P53016">
    <property type="interactions" value="2114"/>
</dbReference>
<dbReference type="IntAct" id="P53016">
    <property type="interactions" value="7"/>
</dbReference>
<dbReference type="MINT" id="P53016"/>
<dbReference type="STRING" id="6239.F31E3.3.1"/>
<dbReference type="PaxDb" id="6239-F31E3.3"/>
<dbReference type="PeptideAtlas" id="P53016"/>
<dbReference type="EnsemblMetazoa" id="F31E3.3.1">
    <property type="protein sequence ID" value="F31E3.3.1"/>
    <property type="gene ID" value="WBGene00004340"/>
</dbReference>
<dbReference type="GeneID" id="175976"/>
<dbReference type="KEGG" id="cel:CELE_F31E3.3"/>
<dbReference type="UCSC" id="F31E3.3">
    <property type="organism name" value="c. elegans"/>
</dbReference>
<dbReference type="AGR" id="WB:WBGene00004340"/>
<dbReference type="CTD" id="175976"/>
<dbReference type="WormBase" id="F31E3.3">
    <property type="protein sequence ID" value="CE01268"/>
    <property type="gene ID" value="WBGene00004340"/>
    <property type="gene designation" value="rfc-4"/>
</dbReference>
<dbReference type="eggNOG" id="KOG0989">
    <property type="taxonomic scope" value="Eukaryota"/>
</dbReference>
<dbReference type="GeneTree" id="ENSGT00550000074917"/>
<dbReference type="HOGENOM" id="CLU_042324_1_1_1"/>
<dbReference type="InParanoid" id="P53016"/>
<dbReference type="OMA" id="VATCEKR"/>
<dbReference type="OrthoDB" id="10249205at2759"/>
<dbReference type="PhylomeDB" id="P53016"/>
<dbReference type="Reactome" id="R-CEL-110312">
    <property type="pathway name" value="Translesion synthesis by REV1"/>
</dbReference>
<dbReference type="Reactome" id="R-CEL-110314">
    <property type="pathway name" value="Recognition of DNA damage by PCNA-containing replication complex"/>
</dbReference>
<dbReference type="Reactome" id="R-CEL-110320">
    <property type="pathway name" value="Translesion Synthesis by POLH"/>
</dbReference>
<dbReference type="Reactome" id="R-CEL-174411">
    <property type="pathway name" value="Polymerase switching on the C-strand of the telomere"/>
</dbReference>
<dbReference type="Reactome" id="R-CEL-176187">
    <property type="pathway name" value="Activation of ATR in response to replication stress"/>
</dbReference>
<dbReference type="Reactome" id="R-CEL-5651801">
    <property type="pathway name" value="PCNA-Dependent Long Patch Base Excision Repair"/>
</dbReference>
<dbReference type="Reactome" id="R-CEL-5655862">
    <property type="pathway name" value="Translesion synthesis by POLK"/>
</dbReference>
<dbReference type="Reactome" id="R-CEL-5656121">
    <property type="pathway name" value="Translesion synthesis by POLI"/>
</dbReference>
<dbReference type="Reactome" id="R-CEL-5656169">
    <property type="pathway name" value="Termination of translesion DNA synthesis"/>
</dbReference>
<dbReference type="Reactome" id="R-CEL-5693607">
    <property type="pathway name" value="Processing of DNA double-strand break ends"/>
</dbReference>
<dbReference type="Reactome" id="R-CEL-5696397">
    <property type="pathway name" value="Gap-filling DNA repair synthesis and ligation in GG-NER"/>
</dbReference>
<dbReference type="Reactome" id="R-CEL-5696400">
    <property type="pathway name" value="Dual Incision in GG-NER"/>
</dbReference>
<dbReference type="Reactome" id="R-CEL-6782135">
    <property type="pathway name" value="Dual incision in TC-NER"/>
</dbReference>
<dbReference type="Reactome" id="R-CEL-6782210">
    <property type="pathway name" value="Gap-filling DNA repair synthesis and ligation in TC-NER"/>
</dbReference>
<dbReference type="Reactome" id="R-CEL-69091">
    <property type="pathway name" value="Polymerase switching"/>
</dbReference>
<dbReference type="PRO" id="PR:P53016"/>
<dbReference type="Proteomes" id="UP000001940">
    <property type="component" value="Chromosome III"/>
</dbReference>
<dbReference type="Bgee" id="WBGene00004340">
    <property type="expression patterns" value="Expressed in germ line (C elegans) and 4 other cell types or tissues"/>
</dbReference>
<dbReference type="GO" id="GO:0005663">
    <property type="term" value="C:DNA replication factor C complex"/>
    <property type="evidence" value="ECO:0000318"/>
    <property type="project" value="GO_Central"/>
</dbReference>
<dbReference type="GO" id="GO:0005634">
    <property type="term" value="C:nucleus"/>
    <property type="evidence" value="ECO:0000318"/>
    <property type="project" value="GO_Central"/>
</dbReference>
<dbReference type="GO" id="GO:0005524">
    <property type="term" value="F:ATP binding"/>
    <property type="evidence" value="ECO:0007669"/>
    <property type="project" value="UniProtKB-KW"/>
</dbReference>
<dbReference type="GO" id="GO:0016887">
    <property type="term" value="F:ATP hydrolysis activity"/>
    <property type="evidence" value="ECO:0007669"/>
    <property type="project" value="InterPro"/>
</dbReference>
<dbReference type="GO" id="GO:0006281">
    <property type="term" value="P:DNA repair"/>
    <property type="evidence" value="ECO:0000318"/>
    <property type="project" value="GO_Central"/>
</dbReference>
<dbReference type="GO" id="GO:0006260">
    <property type="term" value="P:DNA replication"/>
    <property type="evidence" value="ECO:0000315"/>
    <property type="project" value="WormBase"/>
</dbReference>
<dbReference type="GO" id="GO:0006261">
    <property type="term" value="P:DNA-templated DNA replication"/>
    <property type="evidence" value="ECO:0000318"/>
    <property type="project" value="GO_Central"/>
</dbReference>
<dbReference type="CDD" id="cd00009">
    <property type="entry name" value="AAA"/>
    <property type="match status" value="1"/>
</dbReference>
<dbReference type="CDD" id="cd18140">
    <property type="entry name" value="HLD_clamp_RFC"/>
    <property type="match status" value="1"/>
</dbReference>
<dbReference type="FunFam" id="1.10.8.60:FF:000012">
    <property type="entry name" value="Replication factor C subunit 4"/>
    <property type="match status" value="1"/>
</dbReference>
<dbReference type="FunFam" id="3.40.50.300:FF:001912">
    <property type="entry name" value="Replication factor C subunit 4"/>
    <property type="match status" value="1"/>
</dbReference>
<dbReference type="Gene3D" id="1.10.8.60">
    <property type="match status" value="1"/>
</dbReference>
<dbReference type="Gene3D" id="3.40.50.300">
    <property type="entry name" value="P-loop containing nucleotide triphosphate hydrolases"/>
    <property type="match status" value="1"/>
</dbReference>
<dbReference type="InterPro" id="IPR003593">
    <property type="entry name" value="AAA+_ATPase"/>
</dbReference>
<dbReference type="InterPro" id="IPR003959">
    <property type="entry name" value="ATPase_AAA_core"/>
</dbReference>
<dbReference type="InterPro" id="IPR050238">
    <property type="entry name" value="DNA_Rep/Repair_Clamp_Loader"/>
</dbReference>
<dbReference type="InterPro" id="IPR027417">
    <property type="entry name" value="P-loop_NTPase"/>
</dbReference>
<dbReference type="InterPro" id="IPR047854">
    <property type="entry name" value="RFC_lid"/>
</dbReference>
<dbReference type="PANTHER" id="PTHR11669">
    <property type="entry name" value="REPLICATION FACTOR C / DNA POLYMERASE III GAMMA-TAU SUBUNIT"/>
    <property type="match status" value="1"/>
</dbReference>
<dbReference type="PANTHER" id="PTHR11669:SF20">
    <property type="entry name" value="REPLICATION FACTOR C SUBUNIT 4"/>
    <property type="match status" value="1"/>
</dbReference>
<dbReference type="Pfam" id="PF00004">
    <property type="entry name" value="AAA"/>
    <property type="match status" value="1"/>
</dbReference>
<dbReference type="Pfam" id="PF21960">
    <property type="entry name" value="RCF1-5-like_lid"/>
    <property type="match status" value="1"/>
</dbReference>
<dbReference type="SMART" id="SM00382">
    <property type="entry name" value="AAA"/>
    <property type="match status" value="1"/>
</dbReference>
<dbReference type="SUPFAM" id="SSF52540">
    <property type="entry name" value="P-loop containing nucleoside triphosphate hydrolases"/>
    <property type="match status" value="1"/>
</dbReference>
<proteinExistence type="evidence at protein level"/>
<sequence>MEEPMEVDNKRPKVLTWTEKYRPKTLDDIAYQDEVVTMLKGALQGRDLPHLLFYGPPGTGKTSAALAFCRQLFPKNIFHDRVLDLNASDERGIAVVRQKIQSFSKSSLGHSHREDVLKLKIIILDEVDAMTREAQAAMRRVIEDFSKTTRFILICNYVSRLIPPVVSRCAKFRFKSLPAEIQVQRLRTICDAEGTPMSDDELKQVMEYSEGDLRRAVCTLQSLAPILKSGDDNARNCYLRGSSDSLLISNVCKSILTADVPQIIALTKDITKSCTGVAFIRRCFQQLMDEDVINDENIGVMGKLVATCEKRILDGCDLENNLLDFLLTLRETIQ</sequence>
<name>RFC4_CAEEL</name>
<evidence type="ECO:0000250" key="1"/>
<evidence type="ECO:0000255" key="2"/>
<evidence type="ECO:0000305" key="3"/>
<keyword id="KW-0067">ATP-binding</keyword>
<keyword id="KW-0235">DNA replication</keyword>
<keyword id="KW-0547">Nucleotide-binding</keyword>
<keyword id="KW-0539">Nucleus</keyword>
<keyword id="KW-1185">Reference proteome</keyword>
<gene>
    <name type="primary">rfc-4</name>
    <name type="ORF">F31E3.3</name>
</gene>
<reference key="1">
    <citation type="journal article" date="1998" name="Science">
        <title>Genome sequence of the nematode C. elegans: a platform for investigating biology.</title>
        <authorList>
            <consortium name="The C. elegans sequencing consortium"/>
        </authorList>
    </citation>
    <scope>NUCLEOTIDE SEQUENCE [LARGE SCALE GENOMIC DNA]</scope>
    <source>
        <strain>Bristol N2</strain>
    </source>
</reference>
<comment type="function">
    <text evidence="1">The elongation of primed DNA templates by DNA polymerase delta and epsilon requires the action of the accessory proteins PCNA and activator 1. This subunit may be involved in the elongation of the multiprimed DNA template (By similarity).</text>
</comment>
<comment type="subunit">
    <text evidence="1">Heteropentamer of various rfc subunits that forms a complex (RFC) with PCNA in the presence of ATP.</text>
</comment>
<comment type="interaction">
    <interactant intactId="EBI-318155">
        <id>P53016</id>
    </interactant>
    <interactant intactId="EBI-314981">
        <id>Q18547</id>
        <label>rfc-3</label>
    </interactant>
    <organismsDiffer>false</organismsDiffer>
    <experiments>3</experiments>
</comment>
<comment type="subcellular location">
    <subcellularLocation>
        <location evidence="3">Nucleus</location>
    </subcellularLocation>
</comment>
<comment type="similarity">
    <text evidence="3">Belongs to the activator 1 small subunits family.</text>
</comment>